<keyword id="KW-0007">Acetylation</keyword>
<keyword id="KW-0256">Endoplasmic reticulum</keyword>
<keyword id="KW-0275">Fatty acid biosynthesis</keyword>
<keyword id="KW-0276">Fatty acid metabolism</keyword>
<keyword id="KW-0444">Lipid biosynthesis</keyword>
<keyword id="KW-0443">Lipid metabolism</keyword>
<keyword id="KW-0472">Membrane</keyword>
<keyword id="KW-0521">NADP</keyword>
<keyword id="KW-0560">Oxidoreductase</keyword>
<keyword id="KW-0597">Phosphoprotein</keyword>
<keyword id="KW-1185">Reference proteome</keyword>
<keyword id="KW-0746">Sphingolipid metabolism</keyword>
<keyword id="KW-0752">Steroid biosynthesis</keyword>
<keyword id="KW-0812">Transmembrane</keyword>
<keyword id="KW-1133">Transmembrane helix</keyword>
<accession>Q3ZCD7</accession>
<name>TECR_BOVIN</name>
<protein>
    <recommendedName>
        <fullName evidence="5">Very-long-chain enoyl-CoA reductase</fullName>
        <ecNumber evidence="3">1.3.1.93</ecNumber>
    </recommendedName>
    <alternativeName>
        <fullName>Synaptic glycoprotein SC2</fullName>
    </alternativeName>
    <alternativeName>
        <fullName>Trans-2,3-enoyl-CoA reductase</fullName>
        <shortName>TER</shortName>
    </alternativeName>
</protein>
<dbReference type="EC" id="1.3.1.93" evidence="3"/>
<dbReference type="EMBL" id="BC102503">
    <property type="protein sequence ID" value="AAI02504.1"/>
    <property type="molecule type" value="mRNA"/>
</dbReference>
<dbReference type="RefSeq" id="NP_001029920.1">
    <property type="nucleotide sequence ID" value="NM_001034748.2"/>
</dbReference>
<dbReference type="BMRB" id="Q3ZCD7"/>
<dbReference type="SMR" id="Q3ZCD7"/>
<dbReference type="BioGRID" id="541780">
    <property type="interactions" value="1"/>
</dbReference>
<dbReference type="FunCoup" id="Q3ZCD7">
    <property type="interactions" value="1947"/>
</dbReference>
<dbReference type="STRING" id="9913.ENSBTAP00000063163"/>
<dbReference type="GlyCosmos" id="Q3ZCD7">
    <property type="glycosylation" value="2 sites, No reported glycans"/>
</dbReference>
<dbReference type="GlyGen" id="Q3ZCD7">
    <property type="glycosylation" value="2 sites"/>
</dbReference>
<dbReference type="PaxDb" id="9913-ENSBTAP00000036133"/>
<dbReference type="PeptideAtlas" id="Q3ZCD7"/>
<dbReference type="Ensembl" id="ENSBTAT00000036271.3">
    <property type="protein sequence ID" value="ENSBTAP00000036133.1"/>
    <property type="gene ID" value="ENSBTAG00000012632.7"/>
</dbReference>
<dbReference type="GeneID" id="614105"/>
<dbReference type="KEGG" id="bta:614105"/>
<dbReference type="CTD" id="9524"/>
<dbReference type="VEuPathDB" id="HostDB:ENSBTAG00000012632"/>
<dbReference type="VGNC" id="VGNC:35730">
    <property type="gene designation" value="TECR"/>
</dbReference>
<dbReference type="eggNOG" id="KOG1639">
    <property type="taxonomic scope" value="Eukaryota"/>
</dbReference>
<dbReference type="GeneTree" id="ENSGT00950000182886"/>
<dbReference type="HOGENOM" id="CLU_059260_1_0_1"/>
<dbReference type="InParanoid" id="Q3ZCD7"/>
<dbReference type="OMA" id="FSQSTMP"/>
<dbReference type="OrthoDB" id="540503at2759"/>
<dbReference type="TreeFam" id="TF300908"/>
<dbReference type="Reactome" id="R-BTA-75876">
    <property type="pathway name" value="Synthesis of very long-chain fatty acyl-CoAs"/>
</dbReference>
<dbReference type="UniPathway" id="UPA00094"/>
<dbReference type="UniPathway" id="UPA00222"/>
<dbReference type="Proteomes" id="UP000009136">
    <property type="component" value="Chromosome 7"/>
</dbReference>
<dbReference type="Bgee" id="ENSBTAG00000012632">
    <property type="expression patterns" value="Expressed in retina and 106 other cell types or tissues"/>
</dbReference>
<dbReference type="GO" id="GO:0005783">
    <property type="term" value="C:endoplasmic reticulum"/>
    <property type="evidence" value="ECO:0000250"/>
    <property type="project" value="UniProtKB"/>
</dbReference>
<dbReference type="GO" id="GO:0005789">
    <property type="term" value="C:endoplasmic reticulum membrane"/>
    <property type="evidence" value="ECO:0000250"/>
    <property type="project" value="UniProtKB"/>
</dbReference>
<dbReference type="GO" id="GO:0016491">
    <property type="term" value="F:oxidoreductase activity"/>
    <property type="evidence" value="ECO:0000318"/>
    <property type="project" value="GO_Central"/>
</dbReference>
<dbReference type="GO" id="GO:0102758">
    <property type="term" value="F:very-long-chain enoyl-CoA reductase activity"/>
    <property type="evidence" value="ECO:0000250"/>
    <property type="project" value="UniProtKB"/>
</dbReference>
<dbReference type="GO" id="GO:0030497">
    <property type="term" value="P:fatty acid elongation"/>
    <property type="evidence" value="ECO:0000250"/>
    <property type="project" value="UniProtKB"/>
</dbReference>
<dbReference type="GO" id="GO:0006665">
    <property type="term" value="P:sphingolipid metabolic process"/>
    <property type="evidence" value="ECO:0000250"/>
    <property type="project" value="UniProtKB"/>
</dbReference>
<dbReference type="GO" id="GO:0006694">
    <property type="term" value="P:steroid biosynthetic process"/>
    <property type="evidence" value="ECO:0007669"/>
    <property type="project" value="UniProtKB-KW"/>
</dbReference>
<dbReference type="GO" id="GO:0042761">
    <property type="term" value="P:very long-chain fatty acid biosynthetic process"/>
    <property type="evidence" value="ECO:0000250"/>
    <property type="project" value="UniProtKB"/>
</dbReference>
<dbReference type="CDD" id="cd17124">
    <property type="entry name" value="Ubl_TECR"/>
    <property type="match status" value="1"/>
</dbReference>
<dbReference type="FunFam" id="3.10.20.90:FF:000083">
    <property type="entry name" value="Trans-2,3-enoyl-CoA reductase b"/>
    <property type="match status" value="1"/>
</dbReference>
<dbReference type="Gene3D" id="3.10.20.90">
    <property type="entry name" value="Phosphatidylinositol 3-kinase Catalytic Subunit, Chain A, domain 1"/>
    <property type="match status" value="1"/>
</dbReference>
<dbReference type="InterPro" id="IPR001104">
    <property type="entry name" value="3-oxo-5_a-steroid_4-DH_C"/>
</dbReference>
<dbReference type="InterPro" id="IPR039357">
    <property type="entry name" value="SRD5A/TECR"/>
</dbReference>
<dbReference type="InterPro" id="IPR049127">
    <property type="entry name" value="TECR-like_N"/>
</dbReference>
<dbReference type="InterPro" id="IPR029071">
    <property type="entry name" value="Ubiquitin-like_domsf"/>
</dbReference>
<dbReference type="PANTHER" id="PTHR10556">
    <property type="entry name" value="3-OXO-5-ALPHA-STEROID 4-DEHYDROGENASE"/>
    <property type="match status" value="1"/>
</dbReference>
<dbReference type="PANTHER" id="PTHR10556:SF31">
    <property type="entry name" value="VERY-LONG-CHAIN ENOYL-COA REDUCTASE"/>
    <property type="match status" value="1"/>
</dbReference>
<dbReference type="Pfam" id="PF02544">
    <property type="entry name" value="Steroid_dh"/>
    <property type="match status" value="1"/>
</dbReference>
<dbReference type="Pfam" id="PF21696">
    <property type="entry name" value="TECR_N"/>
    <property type="match status" value="1"/>
</dbReference>
<dbReference type="SUPFAM" id="SSF54236">
    <property type="entry name" value="Ubiquitin-like"/>
    <property type="match status" value="1"/>
</dbReference>
<dbReference type="PROSITE" id="PS50244">
    <property type="entry name" value="S5A_REDUCTASE"/>
    <property type="match status" value="1"/>
</dbReference>
<comment type="function">
    <text evidence="3">Involved in both the production of very long-chain fatty acids for sphingolipid synthesis and the degradation of the sphingosine moiety in sphingolipids through the sphingosine 1-phosphate metabolic pathway (By similarity). Catalyzes the last of the four reactions of the long-chain fatty acids elongation cycle (By similarity). This endoplasmic reticulum-bound enzymatic process, allows the addition of 2 carbons to the chain of long- and very long-chain fatty acids/VLCFAs per cycle (By similarity). This enzyme reduces the trans-2,3-enoyl-CoA fatty acid intermediate to an acyl-CoA that can be further elongated by entering a new cycle of elongation (By similarity). Thereby, it participates in the production of VLCFAs of different chain lengths that are involved in multiple biological processes as precursors of membrane lipids and lipid mediators (By similarity). Catalyzes the saturation step of the sphingosine 1-phosphate metabolic pathway, the conversion of trans-2-hexadecenoyl-CoA to palmitoyl-CoA (By similarity).</text>
</comment>
<comment type="catalytic activity">
    <reaction evidence="3">
        <text>a very-long-chain 2,3-saturated fatty acyl-CoA + NADP(+) = a very-long-chain (2E)-enoyl-CoA + NADPH + H(+)</text>
        <dbReference type="Rhea" id="RHEA:14473"/>
        <dbReference type="ChEBI" id="CHEBI:15378"/>
        <dbReference type="ChEBI" id="CHEBI:57783"/>
        <dbReference type="ChEBI" id="CHEBI:58349"/>
        <dbReference type="ChEBI" id="CHEBI:83724"/>
        <dbReference type="ChEBI" id="CHEBI:83728"/>
        <dbReference type="EC" id="1.3.1.93"/>
    </reaction>
    <physiologicalReaction direction="right-to-left" evidence="3">
        <dbReference type="Rhea" id="RHEA:14475"/>
    </physiologicalReaction>
</comment>
<comment type="catalytic activity">
    <reaction evidence="3">
        <text>octadecanoyl-CoA + NADP(+) = (2E)-octadecenoyl-CoA + NADPH + H(+)</text>
        <dbReference type="Rhea" id="RHEA:35351"/>
        <dbReference type="ChEBI" id="CHEBI:15378"/>
        <dbReference type="ChEBI" id="CHEBI:57394"/>
        <dbReference type="ChEBI" id="CHEBI:57783"/>
        <dbReference type="ChEBI" id="CHEBI:58349"/>
        <dbReference type="ChEBI" id="CHEBI:71412"/>
    </reaction>
    <physiologicalReaction direction="right-to-left" evidence="3">
        <dbReference type="Rhea" id="RHEA:35353"/>
    </physiologicalReaction>
</comment>
<comment type="catalytic activity">
    <reaction evidence="3">
        <text>(2E,7Z,10Z,13Z,16Z)-docosapentaenoyl-CoA + NADPH + H(+) = (7Z,10Z,13Z,16Z)-docosatetraenoyl-CoA + NADP(+)</text>
        <dbReference type="Rhea" id="RHEA:39331"/>
        <dbReference type="ChEBI" id="CHEBI:15378"/>
        <dbReference type="ChEBI" id="CHEBI:57783"/>
        <dbReference type="ChEBI" id="CHEBI:58349"/>
        <dbReference type="ChEBI" id="CHEBI:73856"/>
        <dbReference type="ChEBI" id="CHEBI:76416"/>
    </reaction>
    <physiologicalReaction direction="left-to-right" evidence="3">
        <dbReference type="Rhea" id="RHEA:39332"/>
    </physiologicalReaction>
</comment>
<comment type="catalytic activity">
    <reaction evidence="3">
        <text>(2E,7Z,10Z,13Z,16Z,19Z)-docosahexaenoyl-CoA + NADPH + H(+) = (7Z,10Z,13Z,16Z,19Z)-docosapentaenoyl-CoA + NADP(+)</text>
        <dbReference type="Rhea" id="RHEA:39467"/>
        <dbReference type="ChEBI" id="CHEBI:15378"/>
        <dbReference type="ChEBI" id="CHEBI:57783"/>
        <dbReference type="ChEBI" id="CHEBI:58349"/>
        <dbReference type="ChEBI" id="CHEBI:73870"/>
        <dbReference type="ChEBI" id="CHEBI:76461"/>
    </reaction>
    <physiologicalReaction direction="left-to-right" evidence="3">
        <dbReference type="Rhea" id="RHEA:39468"/>
    </physiologicalReaction>
</comment>
<comment type="catalytic activity">
    <reaction evidence="3">
        <text>(2E,8Z,11Z,14Z)-eicosatetraenoyl-CoA + NADPH + H(+) = (8Z,11Z,14Z)-eicosatrienoyl-CoA + NADP(+)</text>
        <dbReference type="Rhea" id="RHEA:39319"/>
        <dbReference type="ChEBI" id="CHEBI:15378"/>
        <dbReference type="ChEBI" id="CHEBI:57783"/>
        <dbReference type="ChEBI" id="CHEBI:58349"/>
        <dbReference type="ChEBI" id="CHEBI:74264"/>
        <dbReference type="ChEBI" id="CHEBI:76412"/>
    </reaction>
    <physiologicalReaction direction="left-to-right" evidence="3">
        <dbReference type="Rhea" id="RHEA:39320"/>
    </physiologicalReaction>
</comment>
<comment type="catalytic activity">
    <reaction evidence="3">
        <text>(2E)-hexadecenoyl-CoA + NADPH + H(+) = hexadecanoyl-CoA + NADP(+)</text>
        <dbReference type="Rhea" id="RHEA:36143"/>
        <dbReference type="ChEBI" id="CHEBI:15378"/>
        <dbReference type="ChEBI" id="CHEBI:57379"/>
        <dbReference type="ChEBI" id="CHEBI:57783"/>
        <dbReference type="ChEBI" id="CHEBI:58349"/>
        <dbReference type="ChEBI" id="CHEBI:61526"/>
    </reaction>
    <physiologicalReaction direction="left-to-right" evidence="3">
        <dbReference type="Rhea" id="RHEA:36144"/>
    </physiologicalReaction>
</comment>
<comment type="pathway">
    <text evidence="3">Lipid metabolism; fatty acid biosynthesis.</text>
</comment>
<comment type="pathway">
    <text evidence="3">Lipid metabolism; sphingolipid metabolism.</text>
</comment>
<comment type="subunit">
    <text evidence="3">Interacts with ELOVL1 and LASS2.</text>
</comment>
<comment type="subcellular location">
    <subcellularLocation>
        <location evidence="3">Endoplasmic reticulum membrane</location>
        <topology evidence="4">Multi-pass membrane protein</topology>
    </subcellularLocation>
</comment>
<comment type="PTM">
    <text evidence="1">Glycosylated.</text>
</comment>
<comment type="similarity">
    <text evidence="5">Belongs to the steroid 5-alpha reductase family.</text>
</comment>
<sequence length="308" mass="36072">MKHYEVEILDAKTREKLCFLDKVEPQATIAEIKNLFTKTHPQWYPARQSLRLDPKGKSLKDEDVLQKLPVGTTATLYFRDLGAQISWVTVFLTEYAGPLFIYLLFYFRVPFIYGRKYDFTSSRHTVVHLACICHSFHYIKRLLETLFVHRFSHGTMPLRNIFKNCTYYWGFAAWMAYYINHPLYTPPTYGAQQVKLALAIFVICQLGNFSIHMALRDLRPAGSKTRKIPYPTRNPFTWLFLLVSCPNYTYEVGSWIGFAIMTQCLPVALFSLVGFTQMTIWAKGKHRSYLKEFRDYPPLRMPIIPFLL</sequence>
<evidence type="ECO:0000250" key="1">
    <source>
        <dbReference type="UniProtKB" id="Q64232"/>
    </source>
</evidence>
<evidence type="ECO:0000250" key="2">
    <source>
        <dbReference type="UniProtKB" id="Q9CY27"/>
    </source>
</evidence>
<evidence type="ECO:0000250" key="3">
    <source>
        <dbReference type="UniProtKB" id="Q9NZ01"/>
    </source>
</evidence>
<evidence type="ECO:0000255" key="4"/>
<evidence type="ECO:0000305" key="5"/>
<gene>
    <name type="primary">TECR</name>
    <name type="synonym">GPSN2</name>
</gene>
<proteinExistence type="evidence at transcript level"/>
<organism>
    <name type="scientific">Bos taurus</name>
    <name type="common">Bovine</name>
    <dbReference type="NCBI Taxonomy" id="9913"/>
    <lineage>
        <taxon>Eukaryota</taxon>
        <taxon>Metazoa</taxon>
        <taxon>Chordata</taxon>
        <taxon>Craniata</taxon>
        <taxon>Vertebrata</taxon>
        <taxon>Euteleostomi</taxon>
        <taxon>Mammalia</taxon>
        <taxon>Eutheria</taxon>
        <taxon>Laurasiatheria</taxon>
        <taxon>Artiodactyla</taxon>
        <taxon>Ruminantia</taxon>
        <taxon>Pecora</taxon>
        <taxon>Bovidae</taxon>
        <taxon>Bovinae</taxon>
        <taxon>Bos</taxon>
    </lineage>
</organism>
<feature type="chain" id="PRO_0000317715" description="Very-long-chain enoyl-CoA reductase">
    <location>
        <begin position="1"/>
        <end position="308"/>
    </location>
</feature>
<feature type="topological domain" description="Cytoplasmic" evidence="3">
    <location>
        <begin position="1"/>
        <end position="86"/>
    </location>
</feature>
<feature type="transmembrane region" description="Helical" evidence="3">
    <location>
        <begin position="87"/>
        <end position="106"/>
    </location>
</feature>
<feature type="topological domain" description="Lumenal" evidence="3">
    <location>
        <begin position="107"/>
        <end position="124"/>
    </location>
</feature>
<feature type="transmembrane region" description="Helical" evidence="3">
    <location>
        <begin position="125"/>
        <end position="147"/>
    </location>
</feature>
<feature type="topological domain" description="Cytoplasmic" evidence="3">
    <location>
        <begin position="148"/>
        <end position="158"/>
    </location>
</feature>
<feature type="transmembrane region" description="Helical" evidence="3">
    <location>
        <begin position="159"/>
        <end position="180"/>
    </location>
</feature>
<feature type="topological domain" description="Lumenal" evidence="3">
    <location>
        <begin position="181"/>
        <end position="189"/>
    </location>
</feature>
<feature type="transmembrane region" description="Helical" evidence="3">
    <location>
        <begin position="190"/>
        <end position="216"/>
    </location>
</feature>
<feature type="topological domain" description="Cytoplasmic" evidence="3">
    <location>
        <begin position="217"/>
        <end position="245"/>
    </location>
</feature>
<feature type="transmembrane region" description="Helical" evidence="3">
    <location>
        <begin position="246"/>
        <end position="262"/>
    </location>
</feature>
<feature type="topological domain" description="Lumenal" evidence="3">
    <location>
        <begin position="263"/>
        <end position="264"/>
    </location>
</feature>
<feature type="transmembrane region" description="Helical" evidence="3">
    <location>
        <begin position="265"/>
        <end position="292"/>
    </location>
</feature>
<feature type="topological domain" description="Cytoplasmic" evidence="3">
    <location>
        <begin position="293"/>
        <end position="308"/>
    </location>
</feature>
<feature type="modified residue" description="N6-acetyllysine" evidence="3">
    <location>
        <position position="22"/>
    </location>
</feature>
<feature type="modified residue" description="Phosphoserine" evidence="2">
    <location>
        <position position="58"/>
    </location>
</feature>
<feature type="modified residue" description="N6-acetyllysine" evidence="2">
    <location>
        <position position="60"/>
    </location>
</feature>
<reference key="1">
    <citation type="submission" date="2005-08" db="EMBL/GenBank/DDBJ databases">
        <authorList>
            <consortium name="NIH - Mammalian Gene Collection (MGC) project"/>
        </authorList>
    </citation>
    <scope>NUCLEOTIDE SEQUENCE [LARGE SCALE MRNA]</scope>
    <source>
        <strain>Crossbred X Angus</strain>
        <tissue>Ileum</tissue>
    </source>
</reference>